<reference key="1">
    <citation type="journal article" date="2008" name="Environ. Microbiol.">
        <title>The complete genome sequence of Moorella thermoacetica (f. Clostridium thermoaceticum).</title>
        <authorList>
            <person name="Pierce E."/>
            <person name="Xie G."/>
            <person name="Barabote R.D."/>
            <person name="Saunders E."/>
            <person name="Han C.S."/>
            <person name="Detter J.C."/>
            <person name="Richardson P."/>
            <person name="Brettin T.S."/>
            <person name="Das A."/>
            <person name="Ljungdahl L.G."/>
            <person name="Ragsdale S.W."/>
        </authorList>
    </citation>
    <scope>NUCLEOTIDE SEQUENCE [LARGE SCALE GENOMIC DNA]</scope>
    <source>
        <strain>ATCC 39073 / JCM 9320</strain>
    </source>
</reference>
<proteinExistence type="inferred from homology"/>
<organism>
    <name type="scientific">Moorella thermoacetica (strain ATCC 39073 / JCM 9320)</name>
    <dbReference type="NCBI Taxonomy" id="264732"/>
    <lineage>
        <taxon>Bacteria</taxon>
        <taxon>Bacillati</taxon>
        <taxon>Bacillota</taxon>
        <taxon>Clostridia</taxon>
        <taxon>Moorellales</taxon>
        <taxon>Moorellaceae</taxon>
        <taxon>Moorella</taxon>
    </lineage>
</organism>
<gene>
    <name evidence="1" type="primary">rplE</name>
    <name type="ordered locus">Moth_2448</name>
</gene>
<protein>
    <recommendedName>
        <fullName evidence="1">Large ribosomal subunit protein uL5</fullName>
    </recommendedName>
    <alternativeName>
        <fullName evidence="2">50S ribosomal protein L5</fullName>
    </alternativeName>
</protein>
<sequence>MARLKEKYLQEIRKALQAKFGYKNIMEIPKLEKIVINMGVSEATQNPKAIDNAVQDLMTITGQKPVVTKAKKSIAAFKLRQGTSIGCKVTLRGDRMYEFLDRLINVALPRVRDFHGVSPNSFDGRGNYTLGIREQLIFPEIEYDKIDKVRGMDIVMVTTAKSDEEARELLRGFGMPFREH</sequence>
<keyword id="KW-0687">Ribonucleoprotein</keyword>
<keyword id="KW-0689">Ribosomal protein</keyword>
<keyword id="KW-0694">RNA-binding</keyword>
<keyword id="KW-0699">rRNA-binding</keyword>
<keyword id="KW-0820">tRNA-binding</keyword>
<dbReference type="EMBL" id="CP000232">
    <property type="protein sequence ID" value="ABC20730.1"/>
    <property type="molecule type" value="Genomic_DNA"/>
</dbReference>
<dbReference type="RefSeq" id="YP_431273.1">
    <property type="nucleotide sequence ID" value="NC_007644.1"/>
</dbReference>
<dbReference type="SMR" id="Q2RFQ9"/>
<dbReference type="STRING" id="264732.Moth_2448"/>
<dbReference type="EnsemblBacteria" id="ABC20730">
    <property type="protein sequence ID" value="ABC20730"/>
    <property type="gene ID" value="Moth_2448"/>
</dbReference>
<dbReference type="KEGG" id="mta:Moth_2448"/>
<dbReference type="PATRIC" id="fig|264732.11.peg.2666"/>
<dbReference type="eggNOG" id="COG0094">
    <property type="taxonomic scope" value="Bacteria"/>
</dbReference>
<dbReference type="HOGENOM" id="CLU_061015_2_1_9"/>
<dbReference type="OrthoDB" id="9806626at2"/>
<dbReference type="GO" id="GO:1990904">
    <property type="term" value="C:ribonucleoprotein complex"/>
    <property type="evidence" value="ECO:0007669"/>
    <property type="project" value="UniProtKB-KW"/>
</dbReference>
<dbReference type="GO" id="GO:0005840">
    <property type="term" value="C:ribosome"/>
    <property type="evidence" value="ECO:0007669"/>
    <property type="project" value="UniProtKB-KW"/>
</dbReference>
<dbReference type="GO" id="GO:0019843">
    <property type="term" value="F:rRNA binding"/>
    <property type="evidence" value="ECO:0007669"/>
    <property type="project" value="UniProtKB-UniRule"/>
</dbReference>
<dbReference type="GO" id="GO:0003735">
    <property type="term" value="F:structural constituent of ribosome"/>
    <property type="evidence" value="ECO:0007669"/>
    <property type="project" value="InterPro"/>
</dbReference>
<dbReference type="GO" id="GO:0000049">
    <property type="term" value="F:tRNA binding"/>
    <property type="evidence" value="ECO:0007669"/>
    <property type="project" value="UniProtKB-UniRule"/>
</dbReference>
<dbReference type="GO" id="GO:0006412">
    <property type="term" value="P:translation"/>
    <property type="evidence" value="ECO:0007669"/>
    <property type="project" value="UniProtKB-UniRule"/>
</dbReference>
<dbReference type="FunFam" id="3.30.1440.10:FF:000001">
    <property type="entry name" value="50S ribosomal protein L5"/>
    <property type="match status" value="1"/>
</dbReference>
<dbReference type="Gene3D" id="3.30.1440.10">
    <property type="match status" value="1"/>
</dbReference>
<dbReference type="HAMAP" id="MF_01333_B">
    <property type="entry name" value="Ribosomal_uL5_B"/>
    <property type="match status" value="1"/>
</dbReference>
<dbReference type="InterPro" id="IPR002132">
    <property type="entry name" value="Ribosomal_uL5"/>
</dbReference>
<dbReference type="InterPro" id="IPR020930">
    <property type="entry name" value="Ribosomal_uL5_bac-type"/>
</dbReference>
<dbReference type="InterPro" id="IPR031309">
    <property type="entry name" value="Ribosomal_uL5_C"/>
</dbReference>
<dbReference type="InterPro" id="IPR020929">
    <property type="entry name" value="Ribosomal_uL5_CS"/>
</dbReference>
<dbReference type="InterPro" id="IPR022803">
    <property type="entry name" value="Ribosomal_uL5_dom_sf"/>
</dbReference>
<dbReference type="InterPro" id="IPR031310">
    <property type="entry name" value="Ribosomal_uL5_N"/>
</dbReference>
<dbReference type="NCBIfam" id="NF000585">
    <property type="entry name" value="PRK00010.1"/>
    <property type="match status" value="1"/>
</dbReference>
<dbReference type="PANTHER" id="PTHR11994">
    <property type="entry name" value="60S RIBOSOMAL PROTEIN L11-RELATED"/>
    <property type="match status" value="1"/>
</dbReference>
<dbReference type="Pfam" id="PF00281">
    <property type="entry name" value="Ribosomal_L5"/>
    <property type="match status" value="1"/>
</dbReference>
<dbReference type="Pfam" id="PF00673">
    <property type="entry name" value="Ribosomal_L5_C"/>
    <property type="match status" value="1"/>
</dbReference>
<dbReference type="PIRSF" id="PIRSF002161">
    <property type="entry name" value="Ribosomal_L5"/>
    <property type="match status" value="1"/>
</dbReference>
<dbReference type="SUPFAM" id="SSF55282">
    <property type="entry name" value="RL5-like"/>
    <property type="match status" value="1"/>
</dbReference>
<dbReference type="PROSITE" id="PS00358">
    <property type="entry name" value="RIBOSOMAL_L5"/>
    <property type="match status" value="1"/>
</dbReference>
<comment type="function">
    <text evidence="1">This is one of the proteins that bind and probably mediate the attachment of the 5S RNA into the large ribosomal subunit, where it forms part of the central protuberance. In the 70S ribosome it contacts protein S13 of the 30S subunit (bridge B1b), connecting the 2 subunits; this bridge is implicated in subunit movement. Contacts the P site tRNA; the 5S rRNA and some of its associated proteins might help stabilize positioning of ribosome-bound tRNAs.</text>
</comment>
<comment type="subunit">
    <text evidence="1">Part of the 50S ribosomal subunit; part of the 5S rRNA/L5/L18/L25 subcomplex. Contacts the 5S rRNA and the P site tRNA. Forms a bridge to the 30S subunit in the 70S ribosome.</text>
</comment>
<comment type="similarity">
    <text evidence="1">Belongs to the universal ribosomal protein uL5 family.</text>
</comment>
<evidence type="ECO:0000255" key="1">
    <source>
        <dbReference type="HAMAP-Rule" id="MF_01333"/>
    </source>
</evidence>
<evidence type="ECO:0000305" key="2"/>
<feature type="chain" id="PRO_0000243021" description="Large ribosomal subunit protein uL5">
    <location>
        <begin position="1"/>
        <end position="180"/>
    </location>
</feature>
<accession>Q2RFQ9</accession>
<name>RL5_MOOTA</name>